<organism>
    <name type="scientific">Laribacter hongkongensis (strain HLHK9)</name>
    <dbReference type="NCBI Taxonomy" id="557598"/>
    <lineage>
        <taxon>Bacteria</taxon>
        <taxon>Pseudomonadati</taxon>
        <taxon>Pseudomonadota</taxon>
        <taxon>Betaproteobacteria</taxon>
        <taxon>Neisseriales</taxon>
        <taxon>Aquaspirillaceae</taxon>
        <taxon>Laribacter</taxon>
    </lineage>
</organism>
<evidence type="ECO:0000255" key="1">
    <source>
        <dbReference type="HAMAP-Rule" id="MF_00235"/>
    </source>
</evidence>
<dbReference type="EC" id="2.7.4.3" evidence="1"/>
<dbReference type="EMBL" id="CP001154">
    <property type="protein sequence ID" value="ACO74097.1"/>
    <property type="molecule type" value="Genomic_DNA"/>
</dbReference>
<dbReference type="RefSeq" id="WP_012696587.1">
    <property type="nucleotide sequence ID" value="NC_012559.1"/>
</dbReference>
<dbReference type="SMR" id="C1D6J0"/>
<dbReference type="STRING" id="557598.LHK_01105"/>
<dbReference type="GeneID" id="75109261"/>
<dbReference type="KEGG" id="lhk:LHK_01105"/>
<dbReference type="eggNOG" id="COG0563">
    <property type="taxonomic scope" value="Bacteria"/>
</dbReference>
<dbReference type="HOGENOM" id="CLU_032354_1_2_4"/>
<dbReference type="UniPathway" id="UPA00588">
    <property type="reaction ID" value="UER00649"/>
</dbReference>
<dbReference type="Proteomes" id="UP000002010">
    <property type="component" value="Chromosome"/>
</dbReference>
<dbReference type="GO" id="GO:0005737">
    <property type="term" value="C:cytoplasm"/>
    <property type="evidence" value="ECO:0007669"/>
    <property type="project" value="UniProtKB-SubCell"/>
</dbReference>
<dbReference type="GO" id="GO:0004017">
    <property type="term" value="F:adenylate kinase activity"/>
    <property type="evidence" value="ECO:0007669"/>
    <property type="project" value="UniProtKB-UniRule"/>
</dbReference>
<dbReference type="GO" id="GO:0005524">
    <property type="term" value="F:ATP binding"/>
    <property type="evidence" value="ECO:0007669"/>
    <property type="project" value="UniProtKB-UniRule"/>
</dbReference>
<dbReference type="GO" id="GO:0044209">
    <property type="term" value="P:AMP salvage"/>
    <property type="evidence" value="ECO:0007669"/>
    <property type="project" value="UniProtKB-UniRule"/>
</dbReference>
<dbReference type="CDD" id="cd01428">
    <property type="entry name" value="ADK"/>
    <property type="match status" value="1"/>
</dbReference>
<dbReference type="FunFam" id="3.40.50.300:FF:000106">
    <property type="entry name" value="Adenylate kinase mitochondrial"/>
    <property type="match status" value="1"/>
</dbReference>
<dbReference type="Gene3D" id="3.40.50.300">
    <property type="entry name" value="P-loop containing nucleotide triphosphate hydrolases"/>
    <property type="match status" value="1"/>
</dbReference>
<dbReference type="HAMAP" id="MF_00235">
    <property type="entry name" value="Adenylate_kinase_Adk"/>
    <property type="match status" value="1"/>
</dbReference>
<dbReference type="InterPro" id="IPR006259">
    <property type="entry name" value="Adenyl_kin_sub"/>
</dbReference>
<dbReference type="InterPro" id="IPR000850">
    <property type="entry name" value="Adenylat/UMP-CMP_kin"/>
</dbReference>
<dbReference type="InterPro" id="IPR033690">
    <property type="entry name" value="Adenylat_kinase_CS"/>
</dbReference>
<dbReference type="InterPro" id="IPR007862">
    <property type="entry name" value="Adenylate_kinase_lid-dom"/>
</dbReference>
<dbReference type="InterPro" id="IPR027417">
    <property type="entry name" value="P-loop_NTPase"/>
</dbReference>
<dbReference type="NCBIfam" id="TIGR01351">
    <property type="entry name" value="adk"/>
    <property type="match status" value="1"/>
</dbReference>
<dbReference type="NCBIfam" id="NF001379">
    <property type="entry name" value="PRK00279.1-1"/>
    <property type="match status" value="1"/>
</dbReference>
<dbReference type="NCBIfam" id="NF001380">
    <property type="entry name" value="PRK00279.1-2"/>
    <property type="match status" value="1"/>
</dbReference>
<dbReference type="NCBIfam" id="NF001381">
    <property type="entry name" value="PRK00279.1-3"/>
    <property type="match status" value="1"/>
</dbReference>
<dbReference type="NCBIfam" id="NF011100">
    <property type="entry name" value="PRK14527.1"/>
    <property type="match status" value="1"/>
</dbReference>
<dbReference type="PANTHER" id="PTHR23359">
    <property type="entry name" value="NUCLEOTIDE KINASE"/>
    <property type="match status" value="1"/>
</dbReference>
<dbReference type="Pfam" id="PF00406">
    <property type="entry name" value="ADK"/>
    <property type="match status" value="1"/>
</dbReference>
<dbReference type="Pfam" id="PF05191">
    <property type="entry name" value="ADK_lid"/>
    <property type="match status" value="1"/>
</dbReference>
<dbReference type="PRINTS" id="PR00094">
    <property type="entry name" value="ADENYLTKNASE"/>
</dbReference>
<dbReference type="SUPFAM" id="SSF52540">
    <property type="entry name" value="P-loop containing nucleoside triphosphate hydrolases"/>
    <property type="match status" value="1"/>
</dbReference>
<dbReference type="PROSITE" id="PS00113">
    <property type="entry name" value="ADENYLATE_KINASE"/>
    <property type="match status" value="1"/>
</dbReference>
<reference key="1">
    <citation type="journal article" date="2009" name="PLoS Genet.">
        <title>The complete genome and proteome of Laribacter hongkongensis reveal potential mechanisms for adaptations to different temperatures and habitats.</title>
        <authorList>
            <person name="Woo P.C.Y."/>
            <person name="Lau S.K.P."/>
            <person name="Tse H."/>
            <person name="Teng J.L.L."/>
            <person name="Curreem S.O."/>
            <person name="Tsang A.K.L."/>
            <person name="Fan R.Y.Y."/>
            <person name="Wong G.K.M."/>
            <person name="Huang Y."/>
            <person name="Loman N.J."/>
            <person name="Snyder L.A.S."/>
            <person name="Cai J.J."/>
            <person name="Huang J.-D."/>
            <person name="Mak W."/>
            <person name="Pallen M.J."/>
            <person name="Lok S."/>
            <person name="Yuen K.-Y."/>
        </authorList>
    </citation>
    <scope>NUCLEOTIDE SEQUENCE [LARGE SCALE GENOMIC DNA]</scope>
    <source>
        <strain>HLHK9</strain>
    </source>
</reference>
<proteinExistence type="inferred from homology"/>
<accession>C1D6J0</accession>
<keyword id="KW-0067">ATP-binding</keyword>
<keyword id="KW-0963">Cytoplasm</keyword>
<keyword id="KW-0418">Kinase</keyword>
<keyword id="KW-0545">Nucleotide biosynthesis</keyword>
<keyword id="KW-0547">Nucleotide-binding</keyword>
<keyword id="KW-1185">Reference proteome</keyword>
<keyword id="KW-0808">Transferase</keyword>
<protein>
    <recommendedName>
        <fullName evidence="1">Adenylate kinase</fullName>
        <shortName evidence="1">AK</shortName>
        <ecNumber evidence="1">2.7.4.3</ecNumber>
    </recommendedName>
    <alternativeName>
        <fullName evidence="1">ATP-AMP transphosphorylase</fullName>
    </alternativeName>
    <alternativeName>
        <fullName evidence="1">ATP:AMP phosphotransferase</fullName>
    </alternativeName>
    <alternativeName>
        <fullName evidence="1">Adenylate monophosphate kinase</fullName>
    </alternativeName>
</protein>
<name>KAD_LARHH</name>
<feature type="chain" id="PRO_1000191151" description="Adenylate kinase">
    <location>
        <begin position="1"/>
        <end position="218"/>
    </location>
</feature>
<feature type="region of interest" description="NMP" evidence="1">
    <location>
        <begin position="30"/>
        <end position="59"/>
    </location>
</feature>
<feature type="region of interest" description="LID" evidence="1">
    <location>
        <begin position="122"/>
        <end position="159"/>
    </location>
</feature>
<feature type="binding site" evidence="1">
    <location>
        <begin position="10"/>
        <end position="15"/>
    </location>
    <ligand>
        <name>ATP</name>
        <dbReference type="ChEBI" id="CHEBI:30616"/>
    </ligand>
</feature>
<feature type="binding site" evidence="1">
    <location>
        <position position="31"/>
    </location>
    <ligand>
        <name>AMP</name>
        <dbReference type="ChEBI" id="CHEBI:456215"/>
    </ligand>
</feature>
<feature type="binding site" evidence="1">
    <location>
        <position position="36"/>
    </location>
    <ligand>
        <name>AMP</name>
        <dbReference type="ChEBI" id="CHEBI:456215"/>
    </ligand>
</feature>
<feature type="binding site" evidence="1">
    <location>
        <begin position="57"/>
        <end position="59"/>
    </location>
    <ligand>
        <name>AMP</name>
        <dbReference type="ChEBI" id="CHEBI:456215"/>
    </ligand>
</feature>
<feature type="binding site" evidence="1">
    <location>
        <begin position="85"/>
        <end position="88"/>
    </location>
    <ligand>
        <name>AMP</name>
        <dbReference type="ChEBI" id="CHEBI:456215"/>
    </ligand>
</feature>
<feature type="binding site" evidence="1">
    <location>
        <position position="92"/>
    </location>
    <ligand>
        <name>AMP</name>
        <dbReference type="ChEBI" id="CHEBI:456215"/>
    </ligand>
</feature>
<feature type="binding site" evidence="1">
    <location>
        <position position="123"/>
    </location>
    <ligand>
        <name>ATP</name>
        <dbReference type="ChEBI" id="CHEBI:30616"/>
    </ligand>
</feature>
<feature type="binding site" evidence="1">
    <location>
        <begin position="132"/>
        <end position="133"/>
    </location>
    <ligand>
        <name>ATP</name>
        <dbReference type="ChEBI" id="CHEBI:30616"/>
    </ligand>
</feature>
<feature type="binding site" evidence="1">
    <location>
        <position position="156"/>
    </location>
    <ligand>
        <name>AMP</name>
        <dbReference type="ChEBI" id="CHEBI:456215"/>
    </ligand>
</feature>
<feature type="binding site" evidence="1">
    <location>
        <position position="167"/>
    </location>
    <ligand>
        <name>AMP</name>
        <dbReference type="ChEBI" id="CHEBI:456215"/>
    </ligand>
</feature>
<feature type="binding site" evidence="1">
    <location>
        <position position="203"/>
    </location>
    <ligand>
        <name>ATP</name>
        <dbReference type="ChEBI" id="CHEBI:30616"/>
    </ligand>
</feature>
<comment type="function">
    <text evidence="1">Catalyzes the reversible transfer of the terminal phosphate group between ATP and AMP. Plays an important role in cellular energy homeostasis and in adenine nucleotide metabolism.</text>
</comment>
<comment type="catalytic activity">
    <reaction evidence="1">
        <text>AMP + ATP = 2 ADP</text>
        <dbReference type="Rhea" id="RHEA:12973"/>
        <dbReference type="ChEBI" id="CHEBI:30616"/>
        <dbReference type="ChEBI" id="CHEBI:456215"/>
        <dbReference type="ChEBI" id="CHEBI:456216"/>
        <dbReference type="EC" id="2.7.4.3"/>
    </reaction>
</comment>
<comment type="pathway">
    <text evidence="1">Purine metabolism; AMP biosynthesis via salvage pathway; AMP from ADP: step 1/1.</text>
</comment>
<comment type="subunit">
    <text evidence="1">Monomer.</text>
</comment>
<comment type="subcellular location">
    <subcellularLocation>
        <location evidence="1">Cytoplasm</location>
    </subcellularLocation>
</comment>
<comment type="domain">
    <text evidence="1">Consists of three domains, a large central CORE domain and two small peripheral domains, NMPbind and LID, which undergo movements during catalysis. The LID domain closes over the site of phosphoryl transfer upon ATP binding. Assembling and dissambling the active center during each catalytic cycle provides an effective means to prevent ATP hydrolysis.</text>
</comment>
<comment type="similarity">
    <text evidence="1">Belongs to the adenylate kinase family.</text>
</comment>
<gene>
    <name evidence="1" type="primary">adk</name>
    <name type="ordered locus">LHK_01105</name>
</gene>
<sequence>MKLILLGAPGAGKGTQAQFICQKFGIPQISTGDMLRAAVKAGTPLGLEAKKVMDAGGLVSDDIIIGLVKERIAQADCANGFLFDGFPRTIPQAEAMKAAGVNLDFVVEIDVPDSAIVERMSGRRVHVASGRTYHVKFNPPKVAGKDDETGEDLIQRADDNEETVLKRLAVYHEQTEVLVGYYSNMAASGDKTAPTYVKIPGVGSVDGIRDAIFRALGA</sequence>